<evidence type="ECO:0000255" key="1">
    <source>
        <dbReference type="HAMAP-Rule" id="MF_00222"/>
    </source>
</evidence>
<comment type="function">
    <text evidence="1">Involved in the biosynthesis of the chorismate, which leads to the biosynthesis of aromatic amino acids. Catalyzes the reversible NADPH linked reduction of 3-dehydroshikimate (DHSA) to yield shikimate (SA).</text>
</comment>
<comment type="catalytic activity">
    <reaction evidence="1">
        <text>shikimate + NADP(+) = 3-dehydroshikimate + NADPH + H(+)</text>
        <dbReference type="Rhea" id="RHEA:17737"/>
        <dbReference type="ChEBI" id="CHEBI:15378"/>
        <dbReference type="ChEBI" id="CHEBI:16630"/>
        <dbReference type="ChEBI" id="CHEBI:36208"/>
        <dbReference type="ChEBI" id="CHEBI:57783"/>
        <dbReference type="ChEBI" id="CHEBI:58349"/>
        <dbReference type="EC" id="1.1.1.25"/>
    </reaction>
</comment>
<comment type="pathway">
    <text evidence="1">Metabolic intermediate biosynthesis; chorismate biosynthesis; chorismate from D-erythrose 4-phosphate and phosphoenolpyruvate: step 4/7.</text>
</comment>
<comment type="subunit">
    <text evidence="1">Homodimer.</text>
</comment>
<comment type="similarity">
    <text evidence="1">Belongs to the shikimate dehydrogenase family.</text>
</comment>
<name>AROE_SACI2</name>
<protein>
    <recommendedName>
        <fullName evidence="1">Shikimate dehydrogenase (NADP(+))</fullName>
        <shortName evidence="1">SDH</shortName>
        <ecNumber evidence="1">1.1.1.25</ecNumber>
    </recommendedName>
</protein>
<organism>
    <name type="scientific">Saccharolobus islandicus (strain L.S.2.15 / Lassen #1)</name>
    <name type="common">Sulfolobus islandicus</name>
    <dbReference type="NCBI Taxonomy" id="429572"/>
    <lineage>
        <taxon>Archaea</taxon>
        <taxon>Thermoproteota</taxon>
        <taxon>Thermoprotei</taxon>
        <taxon>Sulfolobales</taxon>
        <taxon>Sulfolobaceae</taxon>
        <taxon>Saccharolobus</taxon>
    </lineage>
</organism>
<accession>C3MRB8</accession>
<dbReference type="EC" id="1.1.1.25" evidence="1"/>
<dbReference type="EMBL" id="CP001399">
    <property type="protein sequence ID" value="ACP35931.1"/>
    <property type="molecule type" value="Genomic_DNA"/>
</dbReference>
<dbReference type="RefSeq" id="WP_012711771.1">
    <property type="nucleotide sequence ID" value="NC_012589.1"/>
</dbReference>
<dbReference type="SMR" id="C3MRB8"/>
<dbReference type="KEGG" id="sis:LS215_1936"/>
<dbReference type="HOGENOM" id="CLU_044063_3_1_2"/>
<dbReference type="OrthoDB" id="8744at2157"/>
<dbReference type="UniPathway" id="UPA00053">
    <property type="reaction ID" value="UER00087"/>
</dbReference>
<dbReference type="Proteomes" id="UP000001747">
    <property type="component" value="Chromosome"/>
</dbReference>
<dbReference type="GO" id="GO:0004764">
    <property type="term" value="F:shikimate 3-dehydrogenase (NADP+) activity"/>
    <property type="evidence" value="ECO:0007669"/>
    <property type="project" value="UniProtKB-UniRule"/>
</dbReference>
<dbReference type="GO" id="GO:0008652">
    <property type="term" value="P:amino acid biosynthetic process"/>
    <property type="evidence" value="ECO:0007669"/>
    <property type="project" value="UniProtKB-KW"/>
</dbReference>
<dbReference type="GO" id="GO:0009073">
    <property type="term" value="P:aromatic amino acid family biosynthetic process"/>
    <property type="evidence" value="ECO:0007669"/>
    <property type="project" value="UniProtKB-KW"/>
</dbReference>
<dbReference type="GO" id="GO:0009423">
    <property type="term" value="P:chorismate biosynthetic process"/>
    <property type="evidence" value="ECO:0007669"/>
    <property type="project" value="UniProtKB-UniRule"/>
</dbReference>
<dbReference type="GO" id="GO:0019632">
    <property type="term" value="P:shikimate metabolic process"/>
    <property type="evidence" value="ECO:0007669"/>
    <property type="project" value="TreeGrafter"/>
</dbReference>
<dbReference type="CDD" id="cd01065">
    <property type="entry name" value="NAD_bind_Shikimate_DH"/>
    <property type="match status" value="1"/>
</dbReference>
<dbReference type="Gene3D" id="3.40.50.10860">
    <property type="entry name" value="Leucine Dehydrogenase, chain A, domain 1"/>
    <property type="match status" value="1"/>
</dbReference>
<dbReference type="Gene3D" id="3.40.50.720">
    <property type="entry name" value="NAD(P)-binding Rossmann-like Domain"/>
    <property type="match status" value="1"/>
</dbReference>
<dbReference type="HAMAP" id="MF_00222">
    <property type="entry name" value="Shikimate_DH_AroE"/>
    <property type="match status" value="1"/>
</dbReference>
<dbReference type="InterPro" id="IPR046346">
    <property type="entry name" value="Aminoacid_DH-like_N_sf"/>
</dbReference>
<dbReference type="InterPro" id="IPR036291">
    <property type="entry name" value="NAD(P)-bd_dom_sf"/>
</dbReference>
<dbReference type="InterPro" id="IPR013708">
    <property type="entry name" value="Shikimate_DH-bd_N"/>
</dbReference>
<dbReference type="InterPro" id="IPR022893">
    <property type="entry name" value="Shikimate_DH_fam"/>
</dbReference>
<dbReference type="InterPro" id="IPR006151">
    <property type="entry name" value="Shikm_DH/Glu-tRNA_Rdtase"/>
</dbReference>
<dbReference type="PANTHER" id="PTHR21089:SF1">
    <property type="entry name" value="BIFUNCTIONAL 3-DEHYDROQUINATE DEHYDRATASE_SHIKIMATE DEHYDROGENASE, CHLOROPLASTIC"/>
    <property type="match status" value="1"/>
</dbReference>
<dbReference type="PANTHER" id="PTHR21089">
    <property type="entry name" value="SHIKIMATE DEHYDROGENASE"/>
    <property type="match status" value="1"/>
</dbReference>
<dbReference type="Pfam" id="PF01488">
    <property type="entry name" value="Shikimate_DH"/>
    <property type="match status" value="1"/>
</dbReference>
<dbReference type="Pfam" id="PF08501">
    <property type="entry name" value="Shikimate_dh_N"/>
    <property type="match status" value="1"/>
</dbReference>
<dbReference type="SUPFAM" id="SSF53223">
    <property type="entry name" value="Aminoacid dehydrogenase-like, N-terminal domain"/>
    <property type="match status" value="1"/>
</dbReference>
<dbReference type="SUPFAM" id="SSF51735">
    <property type="entry name" value="NAD(P)-binding Rossmann-fold domains"/>
    <property type="match status" value="1"/>
</dbReference>
<keyword id="KW-0028">Amino-acid biosynthesis</keyword>
<keyword id="KW-0057">Aromatic amino acid biosynthesis</keyword>
<keyword id="KW-0521">NADP</keyword>
<keyword id="KW-0560">Oxidoreductase</keyword>
<proteinExistence type="inferred from homology"/>
<sequence length="269" mass="30378">MLEEINYDTKLFGLIGKNIKYTLSPYIHNFSFTTLGINAVYLVFDLDEMKFNRIINGLLEIAEGLNVTIPYKEEVMKYLDNTDTYSTRIQAVNTIYKKSGYNTDYLAIKNLVRKKIGNMSGYECYVYGAGGAAKAAAFALSELGCSSISIVNRTNLRANELVELLNKNGYNASIKENCNSTSNIVVVNSTPNPSVVPENCIQKSELVIEFVYKPVETELIKNAKKYGIKYIDGLEILVNQAVEAEKIWFNKSVSDEKIIEYLYARKLVW</sequence>
<gene>
    <name evidence="1" type="primary">aroE</name>
    <name type="ordered locus">LS215_1936</name>
</gene>
<reference key="1">
    <citation type="journal article" date="2009" name="Proc. Natl. Acad. Sci. U.S.A.">
        <title>Biogeography of the Sulfolobus islandicus pan-genome.</title>
        <authorList>
            <person name="Reno M.L."/>
            <person name="Held N.L."/>
            <person name="Fields C.J."/>
            <person name="Burke P.V."/>
            <person name="Whitaker R.J."/>
        </authorList>
    </citation>
    <scope>NUCLEOTIDE SEQUENCE [LARGE SCALE GENOMIC DNA]</scope>
    <source>
        <strain>L.S.2.15 / Lassen #1</strain>
    </source>
</reference>
<feature type="chain" id="PRO_1000204279" description="Shikimate dehydrogenase (NADP(+))">
    <location>
        <begin position="1"/>
        <end position="269"/>
    </location>
</feature>
<feature type="active site" description="Proton acceptor" evidence="1">
    <location>
        <position position="72"/>
    </location>
</feature>
<feature type="binding site" evidence="1">
    <location>
        <begin position="22"/>
        <end position="24"/>
    </location>
    <ligand>
        <name>shikimate</name>
        <dbReference type="ChEBI" id="CHEBI:36208"/>
    </ligand>
</feature>
<feature type="binding site" evidence="1">
    <location>
        <position position="68"/>
    </location>
    <ligand>
        <name>shikimate</name>
        <dbReference type="ChEBI" id="CHEBI:36208"/>
    </ligand>
</feature>
<feature type="binding site" evidence="1">
    <location>
        <position position="93"/>
    </location>
    <ligand>
        <name>shikimate</name>
        <dbReference type="ChEBI" id="CHEBI:36208"/>
    </ligand>
</feature>
<feature type="binding site" evidence="1">
    <location>
        <position position="104"/>
    </location>
    <ligand>
        <name>shikimate</name>
        <dbReference type="ChEBI" id="CHEBI:36208"/>
    </ligand>
</feature>
<feature type="binding site" evidence="1">
    <location>
        <begin position="128"/>
        <end position="132"/>
    </location>
    <ligand>
        <name>NADP(+)</name>
        <dbReference type="ChEBI" id="CHEBI:58349"/>
    </ligand>
</feature>
<feature type="binding site" evidence="1">
    <location>
        <begin position="152"/>
        <end position="157"/>
    </location>
    <ligand>
        <name>NADP(+)</name>
        <dbReference type="ChEBI" id="CHEBI:58349"/>
    </ligand>
</feature>
<feature type="binding site" evidence="1">
    <location>
        <position position="210"/>
    </location>
    <ligand>
        <name>NADP(+)</name>
        <dbReference type="ChEBI" id="CHEBI:58349"/>
    </ligand>
</feature>
<feature type="binding site" evidence="1">
    <location>
        <position position="212"/>
    </location>
    <ligand>
        <name>shikimate</name>
        <dbReference type="ChEBI" id="CHEBI:36208"/>
    </ligand>
</feature>
<feature type="binding site" evidence="1">
    <location>
        <position position="233"/>
    </location>
    <ligand>
        <name>NADP(+)</name>
        <dbReference type="ChEBI" id="CHEBI:58349"/>
    </ligand>
</feature>